<feature type="chain" id="PRO_0000172958" description="Dephospho-CoA kinase">
    <location>
        <begin position="1"/>
        <end position="200"/>
    </location>
</feature>
<feature type="domain" description="DPCK" evidence="1">
    <location>
        <begin position="4"/>
        <end position="200"/>
    </location>
</feature>
<feature type="binding site" evidence="1">
    <location>
        <begin position="12"/>
        <end position="17"/>
    </location>
    <ligand>
        <name>ATP</name>
        <dbReference type="ChEBI" id="CHEBI:30616"/>
    </ligand>
</feature>
<dbReference type="EC" id="2.7.1.24" evidence="1"/>
<dbReference type="EMBL" id="AE017262">
    <property type="protein sequence ID" value="AAT04360.1"/>
    <property type="molecule type" value="Genomic_DNA"/>
</dbReference>
<dbReference type="RefSeq" id="WP_003725689.1">
    <property type="nucleotide sequence ID" value="NC_002973.6"/>
</dbReference>
<dbReference type="SMR" id="Q71ZA4"/>
<dbReference type="KEGG" id="lmf:LMOf2365_1585"/>
<dbReference type="HOGENOM" id="CLU_057180_0_0_9"/>
<dbReference type="UniPathway" id="UPA00241">
    <property type="reaction ID" value="UER00356"/>
</dbReference>
<dbReference type="GO" id="GO:0005737">
    <property type="term" value="C:cytoplasm"/>
    <property type="evidence" value="ECO:0007669"/>
    <property type="project" value="UniProtKB-SubCell"/>
</dbReference>
<dbReference type="GO" id="GO:0005524">
    <property type="term" value="F:ATP binding"/>
    <property type="evidence" value="ECO:0007669"/>
    <property type="project" value="UniProtKB-UniRule"/>
</dbReference>
<dbReference type="GO" id="GO:0004140">
    <property type="term" value="F:dephospho-CoA kinase activity"/>
    <property type="evidence" value="ECO:0007669"/>
    <property type="project" value="UniProtKB-UniRule"/>
</dbReference>
<dbReference type="GO" id="GO:0015937">
    <property type="term" value="P:coenzyme A biosynthetic process"/>
    <property type="evidence" value="ECO:0007669"/>
    <property type="project" value="UniProtKB-UniRule"/>
</dbReference>
<dbReference type="CDD" id="cd02022">
    <property type="entry name" value="DPCK"/>
    <property type="match status" value="1"/>
</dbReference>
<dbReference type="FunFam" id="3.40.50.300:FF:000991">
    <property type="entry name" value="Dephospho-CoA kinase"/>
    <property type="match status" value="1"/>
</dbReference>
<dbReference type="Gene3D" id="3.40.50.300">
    <property type="entry name" value="P-loop containing nucleotide triphosphate hydrolases"/>
    <property type="match status" value="1"/>
</dbReference>
<dbReference type="HAMAP" id="MF_00376">
    <property type="entry name" value="Dephospho_CoA_kinase"/>
    <property type="match status" value="1"/>
</dbReference>
<dbReference type="InterPro" id="IPR001977">
    <property type="entry name" value="Depp_CoAkinase"/>
</dbReference>
<dbReference type="InterPro" id="IPR027417">
    <property type="entry name" value="P-loop_NTPase"/>
</dbReference>
<dbReference type="NCBIfam" id="TIGR00152">
    <property type="entry name" value="dephospho-CoA kinase"/>
    <property type="match status" value="1"/>
</dbReference>
<dbReference type="PANTHER" id="PTHR10695:SF46">
    <property type="entry name" value="BIFUNCTIONAL COENZYME A SYNTHASE-RELATED"/>
    <property type="match status" value="1"/>
</dbReference>
<dbReference type="PANTHER" id="PTHR10695">
    <property type="entry name" value="DEPHOSPHO-COA KINASE-RELATED"/>
    <property type="match status" value="1"/>
</dbReference>
<dbReference type="Pfam" id="PF01121">
    <property type="entry name" value="CoaE"/>
    <property type="match status" value="1"/>
</dbReference>
<dbReference type="SUPFAM" id="SSF52540">
    <property type="entry name" value="P-loop containing nucleoside triphosphate hydrolases"/>
    <property type="match status" value="1"/>
</dbReference>
<dbReference type="PROSITE" id="PS51219">
    <property type="entry name" value="DPCK"/>
    <property type="match status" value="1"/>
</dbReference>
<proteinExistence type="inferred from homology"/>
<gene>
    <name evidence="1" type="primary">coaE</name>
    <name type="ordered locus">LMOf2365_1585</name>
</gene>
<comment type="function">
    <text evidence="1">Catalyzes the phosphorylation of the 3'-hydroxyl group of dephosphocoenzyme A to form coenzyme A.</text>
</comment>
<comment type="catalytic activity">
    <reaction evidence="1">
        <text>3'-dephospho-CoA + ATP = ADP + CoA + H(+)</text>
        <dbReference type="Rhea" id="RHEA:18245"/>
        <dbReference type="ChEBI" id="CHEBI:15378"/>
        <dbReference type="ChEBI" id="CHEBI:30616"/>
        <dbReference type="ChEBI" id="CHEBI:57287"/>
        <dbReference type="ChEBI" id="CHEBI:57328"/>
        <dbReference type="ChEBI" id="CHEBI:456216"/>
        <dbReference type="EC" id="2.7.1.24"/>
    </reaction>
</comment>
<comment type="pathway">
    <text evidence="1">Cofactor biosynthesis; coenzyme A biosynthesis; CoA from (R)-pantothenate: step 5/5.</text>
</comment>
<comment type="subcellular location">
    <subcellularLocation>
        <location evidence="1">Cytoplasm</location>
    </subcellularLocation>
</comment>
<comment type="similarity">
    <text evidence="1">Belongs to the CoaE family.</text>
</comment>
<name>COAE_LISMF</name>
<accession>Q71ZA4</accession>
<sequence>MGKTIGLTGSVATGKSTVSNMIQQAGIPLVDADIAARKVVERGTEGLKEIVAYFGEEILLADGTLNRAKLGEIIFKDKEKREKLNEITHPRVKDYMLEARERFFEAGEELVFFDIPLLFESHLESLVDKIVVVWTTPETELKRLMERNNLTKEDALRRIESQMGIDEKARKADFVIDNNESLEKTQKQVLTFIKRFVKNK</sequence>
<organism>
    <name type="scientific">Listeria monocytogenes serotype 4b (strain F2365)</name>
    <dbReference type="NCBI Taxonomy" id="265669"/>
    <lineage>
        <taxon>Bacteria</taxon>
        <taxon>Bacillati</taxon>
        <taxon>Bacillota</taxon>
        <taxon>Bacilli</taxon>
        <taxon>Bacillales</taxon>
        <taxon>Listeriaceae</taxon>
        <taxon>Listeria</taxon>
    </lineage>
</organism>
<reference key="1">
    <citation type="journal article" date="2004" name="Nucleic Acids Res.">
        <title>Whole genome comparisons of serotype 4b and 1/2a strains of the food-borne pathogen Listeria monocytogenes reveal new insights into the core genome components of this species.</title>
        <authorList>
            <person name="Nelson K.E."/>
            <person name="Fouts D.E."/>
            <person name="Mongodin E.F."/>
            <person name="Ravel J."/>
            <person name="DeBoy R.T."/>
            <person name="Kolonay J.F."/>
            <person name="Rasko D.A."/>
            <person name="Angiuoli S.V."/>
            <person name="Gill S.R."/>
            <person name="Paulsen I.T."/>
            <person name="Peterson J.D."/>
            <person name="White O."/>
            <person name="Nelson W.C."/>
            <person name="Nierman W.C."/>
            <person name="Beanan M.J."/>
            <person name="Brinkac L.M."/>
            <person name="Daugherty S.C."/>
            <person name="Dodson R.J."/>
            <person name="Durkin A.S."/>
            <person name="Madupu R."/>
            <person name="Haft D.H."/>
            <person name="Selengut J."/>
            <person name="Van Aken S.E."/>
            <person name="Khouri H.M."/>
            <person name="Fedorova N."/>
            <person name="Forberger H.A."/>
            <person name="Tran B."/>
            <person name="Kathariou S."/>
            <person name="Wonderling L.D."/>
            <person name="Uhlich G.A."/>
            <person name="Bayles D.O."/>
            <person name="Luchansky J.B."/>
            <person name="Fraser C.M."/>
        </authorList>
    </citation>
    <scope>NUCLEOTIDE SEQUENCE [LARGE SCALE GENOMIC DNA]</scope>
    <source>
        <strain>F2365</strain>
    </source>
</reference>
<keyword id="KW-0067">ATP-binding</keyword>
<keyword id="KW-0173">Coenzyme A biosynthesis</keyword>
<keyword id="KW-0963">Cytoplasm</keyword>
<keyword id="KW-0418">Kinase</keyword>
<keyword id="KW-0547">Nucleotide-binding</keyword>
<keyword id="KW-0808">Transferase</keyword>
<protein>
    <recommendedName>
        <fullName evidence="1">Dephospho-CoA kinase</fullName>
        <ecNumber evidence="1">2.7.1.24</ecNumber>
    </recommendedName>
    <alternativeName>
        <fullName evidence="1">Dephosphocoenzyme A kinase</fullName>
    </alternativeName>
</protein>
<evidence type="ECO:0000255" key="1">
    <source>
        <dbReference type="HAMAP-Rule" id="MF_00376"/>
    </source>
</evidence>